<evidence type="ECO:0000255" key="1">
    <source>
        <dbReference type="HAMAP-Rule" id="MF_02117"/>
    </source>
</evidence>
<keyword id="KW-0535">Nitrogen fixation</keyword>
<keyword id="KW-1185">Reference proteome</keyword>
<dbReference type="EMBL" id="CP001968">
    <property type="protein sequence ID" value="ADD69395.1"/>
    <property type="molecule type" value="Genomic_DNA"/>
</dbReference>
<dbReference type="RefSeq" id="WP_013011892.1">
    <property type="nucleotide sequence ID" value="NC_013943.1"/>
</dbReference>
<dbReference type="SMR" id="D4H539"/>
<dbReference type="PaxDb" id="522772-Dacet_2637"/>
<dbReference type="KEGG" id="dap:Dacet_2637"/>
<dbReference type="eggNOG" id="ENOG5032SZ8">
    <property type="taxonomic scope" value="Bacteria"/>
</dbReference>
<dbReference type="HOGENOM" id="CLU_149349_0_0_0"/>
<dbReference type="InParanoid" id="D4H539"/>
<dbReference type="OrthoDB" id="7689335at2"/>
<dbReference type="Proteomes" id="UP000002012">
    <property type="component" value="Chromosome"/>
</dbReference>
<dbReference type="GO" id="GO:0009399">
    <property type="term" value="P:nitrogen fixation"/>
    <property type="evidence" value="ECO:0007669"/>
    <property type="project" value="UniProtKB-UniRule"/>
</dbReference>
<dbReference type="HAMAP" id="MF_02117">
    <property type="entry name" value="CowN"/>
    <property type="match status" value="1"/>
</dbReference>
<dbReference type="InterPro" id="IPR024899">
    <property type="entry name" value="CowN"/>
</dbReference>
<dbReference type="NCBIfam" id="NF033689">
    <property type="entry name" value="N2Fix_CO_CowN"/>
    <property type="match status" value="1"/>
</dbReference>
<dbReference type="Pfam" id="PF20543">
    <property type="entry name" value="CowN"/>
    <property type="match status" value="1"/>
</dbReference>
<feature type="chain" id="PRO_0000407255" description="N(2)-fixation sustaining protein CowN">
    <location>
        <begin position="1"/>
        <end position="106"/>
    </location>
</feature>
<comment type="function">
    <text evidence="1">Is required to sustain N(2)-dependent growth in the presence of low levels of carbon monoxide (CO). Probably acts by protecting the N(2) fixation ability of the nitrogenase complex, which is inactivated in the presence of CO.</text>
</comment>
<comment type="similarity">
    <text evidence="1">Belongs to the CowN family.</text>
</comment>
<reference key="1">
    <citation type="journal article" date="2010" name="Stand. Genomic Sci.">
        <title>Complete genome sequence of Denitrovibrio acetiphilus type strain (N2460).</title>
        <authorList>
            <person name="Kiss H."/>
            <person name="Lang E."/>
            <person name="Lapidus A."/>
            <person name="Copeland A."/>
            <person name="Nolan M."/>
            <person name="Glavina Del Rio T."/>
            <person name="Chen F."/>
            <person name="Lucas S."/>
            <person name="Tice H."/>
            <person name="Cheng J.F."/>
            <person name="Han C."/>
            <person name="Goodwin L."/>
            <person name="Pitluck S."/>
            <person name="Liolios K."/>
            <person name="Pati A."/>
            <person name="Ivanova N."/>
            <person name="Mavromatis K."/>
            <person name="Chen A."/>
            <person name="Palaniappan K."/>
            <person name="Land M."/>
            <person name="Hauser L."/>
            <person name="Chang Y.J."/>
            <person name="Jeffries C.D."/>
            <person name="Detter J.C."/>
            <person name="Brettin T."/>
            <person name="Spring S."/>
            <person name="Rohde M."/>
            <person name="Goker M."/>
            <person name="Woyke T."/>
            <person name="Bristow J."/>
            <person name="Eisen J.A."/>
            <person name="Markowitz V."/>
            <person name="Hugenholtz P."/>
            <person name="Kyrpides N.C."/>
            <person name="Klenk H.P."/>
        </authorList>
    </citation>
    <scope>NUCLEOTIDE SEQUENCE [LARGE SCALE GENOMIC DNA]</scope>
    <source>
        <strain>DSM 12809 / NBRC 114555 / N2460</strain>
    </source>
</reference>
<sequence length="106" mass="12374">MCNCKKNIKVDESYVSFKDIDCFENACLVIDNLLRILKEPKNTNAYWEKFIEKIPEAYYTRDSKKDPSEALLYLVCSCTSNIMELFEEIDDEEAIDAMSKCEQECC</sequence>
<name>COWN_DENA2</name>
<proteinExistence type="inferred from homology"/>
<accession>D4H539</accession>
<protein>
    <recommendedName>
        <fullName evidence="1">N(2)-fixation sustaining protein CowN</fullName>
    </recommendedName>
    <alternativeName>
        <fullName evidence="1">CO weal-nitrogenase</fullName>
    </alternativeName>
</protein>
<gene>
    <name evidence="1" type="primary">cowN</name>
    <name type="ordered locus">Dacet_2637</name>
</gene>
<organism>
    <name type="scientific">Denitrovibrio acetiphilus (strain DSM 12809 / NBRC 114555 / N2460)</name>
    <dbReference type="NCBI Taxonomy" id="522772"/>
    <lineage>
        <taxon>Bacteria</taxon>
        <taxon>Pseudomonadati</taxon>
        <taxon>Deferribacterota</taxon>
        <taxon>Deferribacteres</taxon>
        <taxon>Deferribacterales</taxon>
        <taxon>Geovibrionaceae</taxon>
        <taxon>Denitrovibrio</taxon>
    </lineage>
</organism>